<name>GLSA_ALIFM</name>
<dbReference type="EC" id="3.5.1.2" evidence="1"/>
<dbReference type="EMBL" id="CP001139">
    <property type="protein sequence ID" value="ACH66312.1"/>
    <property type="molecule type" value="Genomic_DNA"/>
</dbReference>
<dbReference type="RefSeq" id="WP_012533640.1">
    <property type="nucleotide sequence ID" value="NC_011184.1"/>
</dbReference>
<dbReference type="SMR" id="B5F9R6"/>
<dbReference type="KEGG" id="vfm:VFMJ11_0423"/>
<dbReference type="HOGENOM" id="CLU_027932_1_1_6"/>
<dbReference type="Proteomes" id="UP000001857">
    <property type="component" value="Chromosome I"/>
</dbReference>
<dbReference type="GO" id="GO:0004359">
    <property type="term" value="F:glutaminase activity"/>
    <property type="evidence" value="ECO:0007669"/>
    <property type="project" value="UniProtKB-UniRule"/>
</dbReference>
<dbReference type="GO" id="GO:0006537">
    <property type="term" value="P:glutamate biosynthetic process"/>
    <property type="evidence" value="ECO:0007669"/>
    <property type="project" value="TreeGrafter"/>
</dbReference>
<dbReference type="GO" id="GO:0006543">
    <property type="term" value="P:glutamine catabolic process"/>
    <property type="evidence" value="ECO:0007669"/>
    <property type="project" value="TreeGrafter"/>
</dbReference>
<dbReference type="FunFam" id="3.40.710.10:FF:000005">
    <property type="entry name" value="Glutaminase"/>
    <property type="match status" value="1"/>
</dbReference>
<dbReference type="Gene3D" id="3.40.710.10">
    <property type="entry name" value="DD-peptidase/beta-lactamase superfamily"/>
    <property type="match status" value="1"/>
</dbReference>
<dbReference type="HAMAP" id="MF_00313">
    <property type="entry name" value="Glutaminase"/>
    <property type="match status" value="1"/>
</dbReference>
<dbReference type="InterPro" id="IPR012338">
    <property type="entry name" value="Beta-lactam/transpept-like"/>
</dbReference>
<dbReference type="InterPro" id="IPR015868">
    <property type="entry name" value="Glutaminase"/>
</dbReference>
<dbReference type="NCBIfam" id="TIGR03814">
    <property type="entry name" value="Gln_ase"/>
    <property type="match status" value="1"/>
</dbReference>
<dbReference type="NCBIfam" id="NF002132">
    <property type="entry name" value="PRK00971.1-1"/>
    <property type="match status" value="1"/>
</dbReference>
<dbReference type="NCBIfam" id="NF002133">
    <property type="entry name" value="PRK00971.1-2"/>
    <property type="match status" value="1"/>
</dbReference>
<dbReference type="PANTHER" id="PTHR12544">
    <property type="entry name" value="GLUTAMINASE"/>
    <property type="match status" value="1"/>
</dbReference>
<dbReference type="PANTHER" id="PTHR12544:SF29">
    <property type="entry name" value="GLUTAMINASE"/>
    <property type="match status" value="1"/>
</dbReference>
<dbReference type="Pfam" id="PF04960">
    <property type="entry name" value="Glutaminase"/>
    <property type="match status" value="1"/>
</dbReference>
<dbReference type="SUPFAM" id="SSF56601">
    <property type="entry name" value="beta-lactamase/transpeptidase-like"/>
    <property type="match status" value="1"/>
</dbReference>
<gene>
    <name evidence="1" type="primary">glsA</name>
    <name type="ordered locus">VFMJ11_0423</name>
</gene>
<comment type="catalytic activity">
    <reaction evidence="1">
        <text>L-glutamine + H2O = L-glutamate + NH4(+)</text>
        <dbReference type="Rhea" id="RHEA:15889"/>
        <dbReference type="ChEBI" id="CHEBI:15377"/>
        <dbReference type="ChEBI" id="CHEBI:28938"/>
        <dbReference type="ChEBI" id="CHEBI:29985"/>
        <dbReference type="ChEBI" id="CHEBI:58359"/>
        <dbReference type="EC" id="3.5.1.2"/>
    </reaction>
</comment>
<comment type="subunit">
    <text evidence="1">Homotetramer.</text>
</comment>
<comment type="similarity">
    <text evidence="1">Belongs to the glutaminase family.</text>
</comment>
<proteinExistence type="inferred from homology"/>
<sequence>MKPTKQILEDILDEVRPLIGQGKVADYIPALACVPNDKLGIAVFTNDGEMLTAGDATECFSIQSISKALSLTLAMELYQPEELWQRVGKEPSGQAFNSLIQLEMEQGVPRNPFINAGAIVISDMLYSRFSAPKHRLLEFVRKLSGNEHIIYDRVVANSEMDHSDRNASIAYLMRSFGNFDNEVMPVLKNYFHACALSMNCVDLARTFGYLANKGIQPGISEPIVTPMQCKQINALMATCGLYDGAGEFAYRVGMPGKSGVGGGIIAIVPGEMTIAVWSPELDPSGNSLAGTKALELLSERIGRSIF</sequence>
<protein>
    <recommendedName>
        <fullName evidence="1">Glutaminase</fullName>
        <ecNumber evidence="1">3.5.1.2</ecNumber>
    </recommendedName>
</protein>
<organism>
    <name type="scientific">Aliivibrio fischeri (strain MJ11)</name>
    <name type="common">Vibrio fischeri</name>
    <dbReference type="NCBI Taxonomy" id="388396"/>
    <lineage>
        <taxon>Bacteria</taxon>
        <taxon>Pseudomonadati</taxon>
        <taxon>Pseudomonadota</taxon>
        <taxon>Gammaproteobacteria</taxon>
        <taxon>Vibrionales</taxon>
        <taxon>Vibrionaceae</taxon>
        <taxon>Aliivibrio</taxon>
    </lineage>
</organism>
<reference key="1">
    <citation type="submission" date="2008-08" db="EMBL/GenBank/DDBJ databases">
        <title>Complete sequence of Vibrio fischeri strain MJ11.</title>
        <authorList>
            <person name="Mandel M.J."/>
            <person name="Stabb E.V."/>
            <person name="Ruby E.G."/>
            <person name="Ferriera S."/>
            <person name="Johnson J."/>
            <person name="Kravitz S."/>
            <person name="Beeson K."/>
            <person name="Sutton G."/>
            <person name="Rogers Y.-H."/>
            <person name="Friedman R."/>
            <person name="Frazier M."/>
            <person name="Venter J.C."/>
        </authorList>
    </citation>
    <scope>NUCLEOTIDE SEQUENCE [LARGE SCALE GENOMIC DNA]</scope>
    <source>
        <strain>MJ11</strain>
    </source>
</reference>
<evidence type="ECO:0000255" key="1">
    <source>
        <dbReference type="HAMAP-Rule" id="MF_00313"/>
    </source>
</evidence>
<keyword id="KW-0378">Hydrolase</keyword>
<feature type="chain" id="PRO_1000115711" description="Glutaminase">
    <location>
        <begin position="1"/>
        <end position="306"/>
    </location>
</feature>
<feature type="binding site" evidence="1">
    <location>
        <position position="64"/>
    </location>
    <ligand>
        <name>substrate</name>
    </ligand>
</feature>
<feature type="binding site" evidence="1">
    <location>
        <position position="115"/>
    </location>
    <ligand>
        <name>substrate</name>
    </ligand>
</feature>
<feature type="binding site" evidence="1">
    <location>
        <position position="159"/>
    </location>
    <ligand>
        <name>substrate</name>
    </ligand>
</feature>
<feature type="binding site" evidence="1">
    <location>
        <position position="166"/>
    </location>
    <ligand>
        <name>substrate</name>
    </ligand>
</feature>
<feature type="binding site" evidence="1">
    <location>
        <position position="190"/>
    </location>
    <ligand>
        <name>substrate</name>
    </ligand>
</feature>
<feature type="binding site" evidence="1">
    <location>
        <position position="242"/>
    </location>
    <ligand>
        <name>substrate</name>
    </ligand>
</feature>
<feature type="binding site" evidence="1">
    <location>
        <position position="260"/>
    </location>
    <ligand>
        <name>substrate</name>
    </ligand>
</feature>
<accession>B5F9R6</accession>